<reference key="1">
    <citation type="journal article" date="2009" name="PLoS Genet.">
        <title>Organised genome dynamics in the Escherichia coli species results in highly diverse adaptive paths.</title>
        <authorList>
            <person name="Touchon M."/>
            <person name="Hoede C."/>
            <person name="Tenaillon O."/>
            <person name="Barbe V."/>
            <person name="Baeriswyl S."/>
            <person name="Bidet P."/>
            <person name="Bingen E."/>
            <person name="Bonacorsi S."/>
            <person name="Bouchier C."/>
            <person name="Bouvet O."/>
            <person name="Calteau A."/>
            <person name="Chiapello H."/>
            <person name="Clermont O."/>
            <person name="Cruveiller S."/>
            <person name="Danchin A."/>
            <person name="Diard M."/>
            <person name="Dossat C."/>
            <person name="Karoui M.E."/>
            <person name="Frapy E."/>
            <person name="Garry L."/>
            <person name="Ghigo J.M."/>
            <person name="Gilles A.M."/>
            <person name="Johnson J."/>
            <person name="Le Bouguenec C."/>
            <person name="Lescat M."/>
            <person name="Mangenot S."/>
            <person name="Martinez-Jehanne V."/>
            <person name="Matic I."/>
            <person name="Nassif X."/>
            <person name="Oztas S."/>
            <person name="Petit M.A."/>
            <person name="Pichon C."/>
            <person name="Rouy Z."/>
            <person name="Ruf C.S."/>
            <person name="Schneider D."/>
            <person name="Tourret J."/>
            <person name="Vacherie B."/>
            <person name="Vallenet D."/>
            <person name="Medigue C."/>
            <person name="Rocha E.P.C."/>
            <person name="Denamur E."/>
        </authorList>
    </citation>
    <scope>NUCLEOTIDE SEQUENCE [LARGE SCALE GENOMIC DNA]</scope>
    <source>
        <strain>55989 / EAEC</strain>
    </source>
</reference>
<dbReference type="EC" id="2.7.1.11" evidence="1"/>
<dbReference type="EMBL" id="CU928145">
    <property type="protein sequence ID" value="CAV01109.1"/>
    <property type="molecule type" value="Genomic_DNA"/>
</dbReference>
<dbReference type="RefSeq" id="WP_000591795.1">
    <property type="nucleotide sequence ID" value="NZ_CP028304.1"/>
</dbReference>
<dbReference type="SMR" id="B7LA13"/>
<dbReference type="GeneID" id="93777982"/>
<dbReference type="KEGG" id="eck:EC55989_4394"/>
<dbReference type="HOGENOM" id="CLU_020655_0_1_6"/>
<dbReference type="UniPathway" id="UPA00109">
    <property type="reaction ID" value="UER00182"/>
</dbReference>
<dbReference type="Proteomes" id="UP000000746">
    <property type="component" value="Chromosome"/>
</dbReference>
<dbReference type="GO" id="GO:0005945">
    <property type="term" value="C:6-phosphofructokinase complex"/>
    <property type="evidence" value="ECO:0007669"/>
    <property type="project" value="TreeGrafter"/>
</dbReference>
<dbReference type="GO" id="GO:0003872">
    <property type="term" value="F:6-phosphofructokinase activity"/>
    <property type="evidence" value="ECO:0007669"/>
    <property type="project" value="UniProtKB-UniRule"/>
</dbReference>
<dbReference type="GO" id="GO:0016208">
    <property type="term" value="F:AMP binding"/>
    <property type="evidence" value="ECO:0007669"/>
    <property type="project" value="TreeGrafter"/>
</dbReference>
<dbReference type="GO" id="GO:0005524">
    <property type="term" value="F:ATP binding"/>
    <property type="evidence" value="ECO:0007669"/>
    <property type="project" value="UniProtKB-KW"/>
</dbReference>
<dbReference type="GO" id="GO:0070095">
    <property type="term" value="F:fructose-6-phosphate binding"/>
    <property type="evidence" value="ECO:0007669"/>
    <property type="project" value="TreeGrafter"/>
</dbReference>
<dbReference type="GO" id="GO:0042802">
    <property type="term" value="F:identical protein binding"/>
    <property type="evidence" value="ECO:0007669"/>
    <property type="project" value="TreeGrafter"/>
</dbReference>
<dbReference type="GO" id="GO:0046872">
    <property type="term" value="F:metal ion binding"/>
    <property type="evidence" value="ECO:0007669"/>
    <property type="project" value="UniProtKB-KW"/>
</dbReference>
<dbReference type="GO" id="GO:0048029">
    <property type="term" value="F:monosaccharide binding"/>
    <property type="evidence" value="ECO:0007669"/>
    <property type="project" value="TreeGrafter"/>
</dbReference>
<dbReference type="GO" id="GO:0061621">
    <property type="term" value="P:canonical glycolysis"/>
    <property type="evidence" value="ECO:0007669"/>
    <property type="project" value="TreeGrafter"/>
</dbReference>
<dbReference type="GO" id="GO:0030388">
    <property type="term" value="P:fructose 1,6-bisphosphate metabolic process"/>
    <property type="evidence" value="ECO:0007669"/>
    <property type="project" value="TreeGrafter"/>
</dbReference>
<dbReference type="GO" id="GO:0006002">
    <property type="term" value="P:fructose 6-phosphate metabolic process"/>
    <property type="evidence" value="ECO:0007669"/>
    <property type="project" value="InterPro"/>
</dbReference>
<dbReference type="CDD" id="cd00763">
    <property type="entry name" value="Bacterial_PFK"/>
    <property type="match status" value="1"/>
</dbReference>
<dbReference type="FunFam" id="3.40.50.450:FF:000001">
    <property type="entry name" value="ATP-dependent 6-phosphofructokinase"/>
    <property type="match status" value="1"/>
</dbReference>
<dbReference type="FunFam" id="3.40.50.460:FF:000002">
    <property type="entry name" value="ATP-dependent 6-phosphofructokinase"/>
    <property type="match status" value="1"/>
</dbReference>
<dbReference type="Gene3D" id="3.40.50.450">
    <property type="match status" value="1"/>
</dbReference>
<dbReference type="Gene3D" id="3.40.50.460">
    <property type="entry name" value="Phosphofructokinase domain"/>
    <property type="match status" value="1"/>
</dbReference>
<dbReference type="HAMAP" id="MF_00339">
    <property type="entry name" value="Phosphofructokinase_I_B1"/>
    <property type="match status" value="1"/>
</dbReference>
<dbReference type="InterPro" id="IPR022953">
    <property type="entry name" value="ATP_PFK"/>
</dbReference>
<dbReference type="InterPro" id="IPR012003">
    <property type="entry name" value="ATP_PFK_prok-type"/>
</dbReference>
<dbReference type="InterPro" id="IPR012828">
    <property type="entry name" value="PFKA_ATP_prok"/>
</dbReference>
<dbReference type="InterPro" id="IPR015912">
    <property type="entry name" value="Phosphofructokinase_CS"/>
</dbReference>
<dbReference type="InterPro" id="IPR000023">
    <property type="entry name" value="Phosphofructokinase_dom"/>
</dbReference>
<dbReference type="InterPro" id="IPR035966">
    <property type="entry name" value="PKF_sf"/>
</dbReference>
<dbReference type="NCBIfam" id="TIGR02482">
    <property type="entry name" value="PFKA_ATP"/>
    <property type="match status" value="1"/>
</dbReference>
<dbReference type="NCBIfam" id="NF002872">
    <property type="entry name" value="PRK03202.1"/>
    <property type="match status" value="1"/>
</dbReference>
<dbReference type="PANTHER" id="PTHR13697:SF4">
    <property type="entry name" value="ATP-DEPENDENT 6-PHOSPHOFRUCTOKINASE"/>
    <property type="match status" value="1"/>
</dbReference>
<dbReference type="PANTHER" id="PTHR13697">
    <property type="entry name" value="PHOSPHOFRUCTOKINASE"/>
    <property type="match status" value="1"/>
</dbReference>
<dbReference type="Pfam" id="PF00365">
    <property type="entry name" value="PFK"/>
    <property type="match status" value="1"/>
</dbReference>
<dbReference type="PIRSF" id="PIRSF000532">
    <property type="entry name" value="ATP_PFK_prok"/>
    <property type="match status" value="1"/>
</dbReference>
<dbReference type="PRINTS" id="PR00476">
    <property type="entry name" value="PHFRCTKINASE"/>
</dbReference>
<dbReference type="SUPFAM" id="SSF53784">
    <property type="entry name" value="Phosphofructokinase"/>
    <property type="match status" value="1"/>
</dbReference>
<dbReference type="PROSITE" id="PS00433">
    <property type="entry name" value="PHOSPHOFRUCTOKINASE"/>
    <property type="match status" value="1"/>
</dbReference>
<protein>
    <recommendedName>
        <fullName evidence="1">ATP-dependent 6-phosphofructokinase isozyme 1</fullName>
        <shortName evidence="1">ATP-PFK 1</shortName>
        <shortName evidence="1">Phosphofructokinase 1</shortName>
        <ecNumber evidence="1">2.7.1.11</ecNumber>
    </recommendedName>
    <alternativeName>
        <fullName>6-phosphofructokinase isozyme I</fullName>
    </alternativeName>
    <alternativeName>
        <fullName evidence="1">Phosphohexokinase 1</fullName>
    </alternativeName>
</protein>
<gene>
    <name evidence="1" type="primary">pfkA</name>
    <name type="ordered locus">EC55989_4394</name>
</gene>
<organism>
    <name type="scientific">Escherichia coli (strain 55989 / EAEC)</name>
    <dbReference type="NCBI Taxonomy" id="585055"/>
    <lineage>
        <taxon>Bacteria</taxon>
        <taxon>Pseudomonadati</taxon>
        <taxon>Pseudomonadota</taxon>
        <taxon>Gammaproteobacteria</taxon>
        <taxon>Enterobacterales</taxon>
        <taxon>Enterobacteriaceae</taxon>
        <taxon>Escherichia</taxon>
    </lineage>
</organism>
<feature type="chain" id="PRO_1000192370" description="ATP-dependent 6-phosphofructokinase isozyme 1">
    <location>
        <begin position="1"/>
        <end position="320"/>
    </location>
</feature>
<feature type="active site" description="Proton acceptor" evidence="1">
    <location>
        <position position="128"/>
    </location>
</feature>
<feature type="binding site" evidence="1">
    <location>
        <position position="12"/>
    </location>
    <ligand>
        <name>ATP</name>
        <dbReference type="ChEBI" id="CHEBI:30616"/>
    </ligand>
</feature>
<feature type="binding site" evidence="1">
    <location>
        <begin position="22"/>
        <end position="26"/>
    </location>
    <ligand>
        <name>ADP</name>
        <dbReference type="ChEBI" id="CHEBI:456216"/>
        <note>allosteric activator; ligand shared between dimeric partners</note>
    </ligand>
</feature>
<feature type="binding site" evidence="1">
    <location>
        <begin position="55"/>
        <end position="60"/>
    </location>
    <ligand>
        <name>ADP</name>
        <dbReference type="ChEBI" id="CHEBI:456216"/>
        <note>allosteric activator; ligand shared between dimeric partners</note>
    </ligand>
</feature>
<feature type="binding site" evidence="1">
    <location>
        <begin position="73"/>
        <end position="74"/>
    </location>
    <ligand>
        <name>ATP</name>
        <dbReference type="ChEBI" id="CHEBI:30616"/>
    </ligand>
</feature>
<feature type="binding site" evidence="1">
    <location>
        <begin position="103"/>
        <end position="106"/>
    </location>
    <ligand>
        <name>ATP</name>
        <dbReference type="ChEBI" id="CHEBI:30616"/>
    </ligand>
</feature>
<feature type="binding site" evidence="1">
    <location>
        <position position="104"/>
    </location>
    <ligand>
        <name>Mg(2+)</name>
        <dbReference type="ChEBI" id="CHEBI:18420"/>
        <note>catalytic</note>
    </ligand>
</feature>
<feature type="binding site" description="in other chain" evidence="1">
    <location>
        <begin position="126"/>
        <end position="128"/>
    </location>
    <ligand>
        <name>substrate</name>
        <note>ligand shared between dimeric partners</note>
    </ligand>
</feature>
<feature type="binding site" description="in other chain" evidence="1">
    <location>
        <position position="155"/>
    </location>
    <ligand>
        <name>ADP</name>
        <dbReference type="ChEBI" id="CHEBI:456216"/>
        <note>allosteric activator; ligand shared between dimeric partners</note>
    </ligand>
</feature>
<feature type="binding site" evidence="1">
    <location>
        <position position="163"/>
    </location>
    <ligand>
        <name>substrate</name>
        <note>ligand shared between dimeric partners</note>
    </ligand>
</feature>
<feature type="binding site" description="in other chain" evidence="1">
    <location>
        <begin position="170"/>
        <end position="172"/>
    </location>
    <ligand>
        <name>substrate</name>
        <note>ligand shared between dimeric partners</note>
    </ligand>
</feature>
<feature type="binding site" description="in other chain" evidence="1">
    <location>
        <begin position="186"/>
        <end position="188"/>
    </location>
    <ligand>
        <name>ADP</name>
        <dbReference type="ChEBI" id="CHEBI:456216"/>
        <note>allosteric activator; ligand shared between dimeric partners</note>
    </ligand>
</feature>
<feature type="binding site" description="in other chain" evidence="1">
    <location>
        <position position="212"/>
    </location>
    <ligand>
        <name>ADP</name>
        <dbReference type="ChEBI" id="CHEBI:456216"/>
        <note>allosteric activator; ligand shared between dimeric partners</note>
    </ligand>
</feature>
<feature type="binding site" description="in other chain" evidence="1">
    <location>
        <begin position="214"/>
        <end position="216"/>
    </location>
    <ligand>
        <name>ADP</name>
        <dbReference type="ChEBI" id="CHEBI:456216"/>
        <note>allosteric activator; ligand shared between dimeric partners</note>
    </ligand>
</feature>
<feature type="binding site" description="in other chain" evidence="1">
    <location>
        <position position="223"/>
    </location>
    <ligand>
        <name>substrate</name>
        <note>ligand shared between dimeric partners</note>
    </ligand>
</feature>
<feature type="binding site" evidence="1">
    <location>
        <position position="244"/>
    </location>
    <ligand>
        <name>substrate</name>
        <note>ligand shared between dimeric partners</note>
    </ligand>
</feature>
<feature type="binding site" description="in other chain" evidence="1">
    <location>
        <begin position="250"/>
        <end position="253"/>
    </location>
    <ligand>
        <name>substrate</name>
        <note>ligand shared between dimeric partners</note>
    </ligand>
</feature>
<name>PFKA_ECO55</name>
<evidence type="ECO:0000255" key="1">
    <source>
        <dbReference type="HAMAP-Rule" id="MF_00339"/>
    </source>
</evidence>
<keyword id="KW-0021">Allosteric enzyme</keyword>
<keyword id="KW-0067">ATP-binding</keyword>
<keyword id="KW-0963">Cytoplasm</keyword>
<keyword id="KW-0324">Glycolysis</keyword>
<keyword id="KW-0418">Kinase</keyword>
<keyword id="KW-0460">Magnesium</keyword>
<keyword id="KW-0479">Metal-binding</keyword>
<keyword id="KW-0547">Nucleotide-binding</keyword>
<keyword id="KW-1185">Reference proteome</keyword>
<keyword id="KW-0808">Transferase</keyword>
<comment type="function">
    <text evidence="1">Catalyzes the phosphorylation of D-fructose 6-phosphate to fructose 1,6-bisphosphate by ATP, the first committing step of glycolysis.</text>
</comment>
<comment type="catalytic activity">
    <reaction evidence="1">
        <text>beta-D-fructose 6-phosphate + ATP = beta-D-fructose 1,6-bisphosphate + ADP + H(+)</text>
        <dbReference type="Rhea" id="RHEA:16109"/>
        <dbReference type="ChEBI" id="CHEBI:15378"/>
        <dbReference type="ChEBI" id="CHEBI:30616"/>
        <dbReference type="ChEBI" id="CHEBI:32966"/>
        <dbReference type="ChEBI" id="CHEBI:57634"/>
        <dbReference type="ChEBI" id="CHEBI:456216"/>
        <dbReference type="EC" id="2.7.1.11"/>
    </reaction>
</comment>
<comment type="cofactor">
    <cofactor evidence="1">
        <name>Mg(2+)</name>
        <dbReference type="ChEBI" id="CHEBI:18420"/>
    </cofactor>
</comment>
<comment type="activity regulation">
    <text evidence="1">Allosterically activated by ADP and other diphosphonucleosides, and allosterically inhibited by phosphoenolpyruvate.</text>
</comment>
<comment type="pathway">
    <text evidence="1">Carbohydrate degradation; glycolysis; D-glyceraldehyde 3-phosphate and glycerone phosphate from D-glucose: step 3/4.</text>
</comment>
<comment type="subunit">
    <text evidence="1">Homotetramer.</text>
</comment>
<comment type="subcellular location">
    <subcellularLocation>
        <location evidence="1">Cytoplasm</location>
    </subcellularLocation>
</comment>
<comment type="similarity">
    <text evidence="1">Belongs to the phosphofructokinase type A (PFKA) family. ATP-dependent PFK group I subfamily. Prokaryotic clade 'B1' sub-subfamily.</text>
</comment>
<sequence>MIKKIGVLTSGGDAPGMNAAIRGVVRSALTEGLEVMGIYDGYLGLYEDRMVQLDRYSVSDMINRGGTFLGSARFPEFRDENIRAVAIENLKKRGIDALVVIGGDGSYMGAMRLTEMGFPCIGLPGTIDNDIKGTDYTIGFFTALSTVVEAIDRLRDTSSSHQRISVVEVMGRYCGDLTLAAAIAGGCEFVVVPEVEFSREDLVNEIKAGIAKGKKHAIVAITEHMCDVDELAHFIEKETGRETRATVLGHIQRGGSPVPYDRILASRMGAYAIDLLLAGYGGRCVGIQNEQLVHHDIIDAIENMKRPFKGDWLDCAKKLY</sequence>
<accession>B7LA13</accession>
<proteinExistence type="inferred from homology"/>